<sequence length="539" mass="58828">MEGENDPLLGSYKPKRRRSSLVYGLSRPQFLDTAASEVSPIPQERPTTSLRKPTPRVQRPATDVSYGALEETEENESIASGLSVQEDFNSKAWWKELTLLIKFATPVVLTSLLQYGEVVTTVFSLGHLGKTELAAASLSNMTATITAFAIYQGIVSALDTVGTQSFGSGNYEMVGLHLQRILAILLLIQFPIFLIWWKIEGILLFLRQDPLTCMFAAKYMRVMMLASPAYALFEALKRFLQVQGIFHPVTYILAIVVPINIFLNYLFVWSPWVGFGFLGAPVAVALTLWSACAVLIIYIMKVNGRQAWGGFSREALKNWGPLCRLAVPGVIMICSEYWAFELVTFASGVLGTTELASMSVLSTTSTLSYNLAFGVAAAAATRVGNLIGAGNTKLAKLATHVSINLGAAIGVIIAVILFLTRNTWTYIFTSDKDVVALVATIIPLVALINIADNTQCVAGGLLRGQGRQRIGGVVNFIAYYLLGLPVAIILCFKLDWGLYGLWIGIGAAILIIAGVETWCSLHVNWDHLVELANRQFDEA</sequence>
<protein>
    <recommendedName>
        <fullName>Uncharacterized transporter C4B3.13</fullName>
    </recommendedName>
</protein>
<evidence type="ECO:0000255" key="1"/>
<evidence type="ECO:0000256" key="2">
    <source>
        <dbReference type="SAM" id="MobiDB-lite"/>
    </source>
</evidence>
<evidence type="ECO:0000269" key="3">
    <source>
    </source>
</evidence>
<evidence type="ECO:0000305" key="4"/>
<keyword id="KW-0472">Membrane</keyword>
<keyword id="KW-1185">Reference proteome</keyword>
<keyword id="KW-0812">Transmembrane</keyword>
<keyword id="KW-1133">Transmembrane helix</keyword>
<keyword id="KW-0926">Vacuole</keyword>
<accession>Q9USK3</accession>
<organism>
    <name type="scientific">Schizosaccharomyces pombe (strain 972 / ATCC 24843)</name>
    <name type="common">Fission yeast</name>
    <dbReference type="NCBI Taxonomy" id="284812"/>
    <lineage>
        <taxon>Eukaryota</taxon>
        <taxon>Fungi</taxon>
        <taxon>Dikarya</taxon>
        <taxon>Ascomycota</taxon>
        <taxon>Taphrinomycotina</taxon>
        <taxon>Schizosaccharomycetes</taxon>
        <taxon>Schizosaccharomycetales</taxon>
        <taxon>Schizosaccharomycetaceae</taxon>
        <taxon>Schizosaccharomyces</taxon>
    </lineage>
</organism>
<reference key="1">
    <citation type="journal article" date="2002" name="Nature">
        <title>The genome sequence of Schizosaccharomyces pombe.</title>
        <authorList>
            <person name="Wood V."/>
            <person name="Gwilliam R."/>
            <person name="Rajandream M.A."/>
            <person name="Lyne M.H."/>
            <person name="Lyne R."/>
            <person name="Stewart A."/>
            <person name="Sgouros J.G."/>
            <person name="Peat N."/>
            <person name="Hayles J."/>
            <person name="Baker S.G."/>
            <person name="Basham D."/>
            <person name="Bowman S."/>
            <person name="Brooks K."/>
            <person name="Brown D."/>
            <person name="Brown S."/>
            <person name="Chillingworth T."/>
            <person name="Churcher C.M."/>
            <person name="Collins M."/>
            <person name="Connor R."/>
            <person name="Cronin A."/>
            <person name="Davis P."/>
            <person name="Feltwell T."/>
            <person name="Fraser A."/>
            <person name="Gentles S."/>
            <person name="Goble A."/>
            <person name="Hamlin N."/>
            <person name="Harris D.E."/>
            <person name="Hidalgo J."/>
            <person name="Hodgson G."/>
            <person name="Holroyd S."/>
            <person name="Hornsby T."/>
            <person name="Howarth S."/>
            <person name="Huckle E.J."/>
            <person name="Hunt S."/>
            <person name="Jagels K."/>
            <person name="James K.D."/>
            <person name="Jones L."/>
            <person name="Jones M."/>
            <person name="Leather S."/>
            <person name="McDonald S."/>
            <person name="McLean J."/>
            <person name="Mooney P."/>
            <person name="Moule S."/>
            <person name="Mungall K.L."/>
            <person name="Murphy L.D."/>
            <person name="Niblett D."/>
            <person name="Odell C."/>
            <person name="Oliver K."/>
            <person name="O'Neil S."/>
            <person name="Pearson D."/>
            <person name="Quail M.A."/>
            <person name="Rabbinowitsch E."/>
            <person name="Rutherford K.M."/>
            <person name="Rutter S."/>
            <person name="Saunders D."/>
            <person name="Seeger K."/>
            <person name="Sharp S."/>
            <person name="Skelton J."/>
            <person name="Simmonds M.N."/>
            <person name="Squares R."/>
            <person name="Squares S."/>
            <person name="Stevens K."/>
            <person name="Taylor K."/>
            <person name="Taylor R.G."/>
            <person name="Tivey A."/>
            <person name="Walsh S.V."/>
            <person name="Warren T."/>
            <person name="Whitehead S."/>
            <person name="Woodward J.R."/>
            <person name="Volckaert G."/>
            <person name="Aert R."/>
            <person name="Robben J."/>
            <person name="Grymonprez B."/>
            <person name="Weltjens I."/>
            <person name="Vanstreels E."/>
            <person name="Rieger M."/>
            <person name="Schaefer M."/>
            <person name="Mueller-Auer S."/>
            <person name="Gabel C."/>
            <person name="Fuchs M."/>
            <person name="Duesterhoeft A."/>
            <person name="Fritzc C."/>
            <person name="Holzer E."/>
            <person name="Moestl D."/>
            <person name="Hilbert H."/>
            <person name="Borzym K."/>
            <person name="Langer I."/>
            <person name="Beck A."/>
            <person name="Lehrach H."/>
            <person name="Reinhardt R."/>
            <person name="Pohl T.M."/>
            <person name="Eger P."/>
            <person name="Zimmermann W."/>
            <person name="Wedler H."/>
            <person name="Wambutt R."/>
            <person name="Purnelle B."/>
            <person name="Goffeau A."/>
            <person name="Cadieu E."/>
            <person name="Dreano S."/>
            <person name="Gloux S."/>
            <person name="Lelaure V."/>
            <person name="Mottier S."/>
            <person name="Galibert F."/>
            <person name="Aves S.J."/>
            <person name="Xiang Z."/>
            <person name="Hunt C."/>
            <person name="Moore K."/>
            <person name="Hurst S.M."/>
            <person name="Lucas M."/>
            <person name="Rochet M."/>
            <person name="Gaillardin C."/>
            <person name="Tallada V.A."/>
            <person name="Garzon A."/>
            <person name="Thode G."/>
            <person name="Daga R.R."/>
            <person name="Cruzado L."/>
            <person name="Jimenez J."/>
            <person name="Sanchez M."/>
            <person name="del Rey F."/>
            <person name="Benito J."/>
            <person name="Dominguez A."/>
            <person name="Revuelta J.L."/>
            <person name="Moreno S."/>
            <person name="Armstrong J."/>
            <person name="Forsburg S.L."/>
            <person name="Cerutti L."/>
            <person name="Lowe T."/>
            <person name="McCombie W.R."/>
            <person name="Paulsen I."/>
            <person name="Potashkin J."/>
            <person name="Shpakovski G.V."/>
            <person name="Ussery D."/>
            <person name="Barrell B.G."/>
            <person name="Nurse P."/>
        </authorList>
    </citation>
    <scope>NUCLEOTIDE SEQUENCE [LARGE SCALE GENOMIC DNA]</scope>
    <source>
        <strain>972 / ATCC 24843</strain>
    </source>
</reference>
<reference key="2">
    <citation type="journal article" date="2006" name="Nat. Biotechnol.">
        <title>ORFeome cloning and global analysis of protein localization in the fission yeast Schizosaccharomyces pombe.</title>
        <authorList>
            <person name="Matsuyama A."/>
            <person name="Arai R."/>
            <person name="Yashiroda Y."/>
            <person name="Shirai A."/>
            <person name="Kamata A."/>
            <person name="Sekido S."/>
            <person name="Kobayashi Y."/>
            <person name="Hashimoto A."/>
            <person name="Hamamoto M."/>
            <person name="Hiraoka Y."/>
            <person name="Horinouchi S."/>
            <person name="Yoshida M."/>
        </authorList>
    </citation>
    <scope>SUBCELLULAR LOCATION [LARGE SCALE ANALYSIS]</scope>
</reference>
<name>YJ2D_SCHPO</name>
<comment type="subcellular location">
    <subcellularLocation>
        <location evidence="3">Vacuole membrane</location>
        <topology evidence="3">Multi-pass membrane protein</topology>
    </subcellularLocation>
</comment>
<comment type="similarity">
    <text evidence="4">Belongs to the multi antimicrobial extrusion (MATE) (TC 2.A.66.1) family.</text>
</comment>
<gene>
    <name type="ORF">SPCC4B3.13</name>
</gene>
<proteinExistence type="inferred from homology"/>
<dbReference type="EMBL" id="CU329672">
    <property type="protein sequence ID" value="CAB60687.1"/>
    <property type="molecule type" value="Genomic_DNA"/>
</dbReference>
<dbReference type="PIR" id="T50435">
    <property type="entry name" value="T50435"/>
</dbReference>
<dbReference type="RefSeq" id="NP_588077.1">
    <property type="nucleotide sequence ID" value="NM_001023069.2"/>
</dbReference>
<dbReference type="SMR" id="Q9USK3"/>
<dbReference type="BioGRID" id="276023">
    <property type="interactions" value="13"/>
</dbReference>
<dbReference type="FunCoup" id="Q9USK3">
    <property type="interactions" value="115"/>
</dbReference>
<dbReference type="STRING" id="284812.Q9USK3"/>
<dbReference type="iPTMnet" id="Q9USK3"/>
<dbReference type="PaxDb" id="4896-SPCC4B3.13.1"/>
<dbReference type="EnsemblFungi" id="SPCC4B3.13.1">
    <property type="protein sequence ID" value="SPCC4B3.13.1:pep"/>
    <property type="gene ID" value="SPCC4B3.13"/>
</dbReference>
<dbReference type="KEGG" id="spo:2539460"/>
<dbReference type="PomBase" id="SPCC4B3.13"/>
<dbReference type="VEuPathDB" id="FungiDB:SPCC4B3.13"/>
<dbReference type="eggNOG" id="KOG1347">
    <property type="taxonomic scope" value="Eukaryota"/>
</dbReference>
<dbReference type="HOGENOM" id="CLU_012893_1_2_1"/>
<dbReference type="InParanoid" id="Q9USK3"/>
<dbReference type="OMA" id="CTETWAY"/>
<dbReference type="PhylomeDB" id="Q9USK3"/>
<dbReference type="Reactome" id="R-SPO-425366">
    <property type="pathway name" value="Transport of bile salts and organic acids, metal ions and amine compounds"/>
</dbReference>
<dbReference type="PRO" id="PR:Q9USK3"/>
<dbReference type="Proteomes" id="UP000002485">
    <property type="component" value="Chromosome III"/>
</dbReference>
<dbReference type="GO" id="GO:0000329">
    <property type="term" value="C:fungal-type vacuole membrane"/>
    <property type="evidence" value="ECO:0007005"/>
    <property type="project" value="PomBase"/>
</dbReference>
<dbReference type="GO" id="GO:0016020">
    <property type="term" value="C:membrane"/>
    <property type="evidence" value="ECO:0000318"/>
    <property type="project" value="GO_Central"/>
</dbReference>
<dbReference type="GO" id="GO:0015297">
    <property type="term" value="F:antiporter activity"/>
    <property type="evidence" value="ECO:0007669"/>
    <property type="project" value="InterPro"/>
</dbReference>
<dbReference type="GO" id="GO:0022857">
    <property type="term" value="F:transmembrane transporter activity"/>
    <property type="evidence" value="ECO:0000318"/>
    <property type="project" value="GO_Central"/>
</dbReference>
<dbReference type="GO" id="GO:0042910">
    <property type="term" value="F:xenobiotic transmembrane transporter activity"/>
    <property type="evidence" value="ECO:0007669"/>
    <property type="project" value="InterPro"/>
</dbReference>
<dbReference type="GO" id="GO:1990961">
    <property type="term" value="P:xenobiotic detoxification by transmembrane export across the plasma membrane"/>
    <property type="evidence" value="ECO:0007669"/>
    <property type="project" value="InterPro"/>
</dbReference>
<dbReference type="CDD" id="cd13132">
    <property type="entry name" value="MATE_eukaryotic"/>
    <property type="match status" value="1"/>
</dbReference>
<dbReference type="InterPro" id="IPR045069">
    <property type="entry name" value="MATE_euk"/>
</dbReference>
<dbReference type="InterPro" id="IPR002528">
    <property type="entry name" value="MATE_fam"/>
</dbReference>
<dbReference type="NCBIfam" id="TIGR00797">
    <property type="entry name" value="matE"/>
    <property type="match status" value="1"/>
</dbReference>
<dbReference type="PANTHER" id="PTHR11206">
    <property type="entry name" value="MULTIDRUG RESISTANCE PROTEIN"/>
    <property type="match status" value="1"/>
</dbReference>
<dbReference type="Pfam" id="PF01554">
    <property type="entry name" value="MatE"/>
    <property type="match status" value="2"/>
</dbReference>
<feature type="chain" id="PRO_0000316589" description="Uncharacterized transporter C4B3.13">
    <location>
        <begin position="1"/>
        <end position="539"/>
    </location>
</feature>
<feature type="transmembrane region" description="Helical" evidence="1">
    <location>
        <begin position="103"/>
        <end position="123"/>
    </location>
</feature>
<feature type="transmembrane region" description="Helical" evidence="1">
    <location>
        <begin position="141"/>
        <end position="161"/>
    </location>
</feature>
<feature type="transmembrane region" description="Helical" evidence="1">
    <location>
        <begin position="184"/>
        <end position="204"/>
    </location>
</feature>
<feature type="transmembrane region" description="Helical" evidence="1">
    <location>
        <begin position="244"/>
        <end position="264"/>
    </location>
</feature>
<feature type="transmembrane region" description="Helical" evidence="1">
    <location>
        <begin position="277"/>
        <end position="299"/>
    </location>
</feature>
<feature type="transmembrane region" description="Helical" evidence="1">
    <location>
        <begin position="325"/>
        <end position="345"/>
    </location>
</feature>
<feature type="transmembrane region" description="Helical" evidence="1">
    <location>
        <begin position="360"/>
        <end position="380"/>
    </location>
</feature>
<feature type="transmembrane region" description="Helical" evidence="1">
    <location>
        <begin position="399"/>
        <end position="419"/>
    </location>
</feature>
<feature type="transmembrane region" description="Helical" evidence="1">
    <location>
        <begin position="434"/>
        <end position="454"/>
    </location>
</feature>
<feature type="transmembrane region" description="Helical" evidence="1">
    <location>
        <begin position="470"/>
        <end position="490"/>
    </location>
</feature>
<feature type="transmembrane region" description="Helical" evidence="1">
    <location>
        <begin position="496"/>
        <end position="516"/>
    </location>
</feature>
<feature type="region of interest" description="Disordered" evidence="2">
    <location>
        <begin position="34"/>
        <end position="63"/>
    </location>
</feature>